<reference key="1">
    <citation type="submission" date="2005-02" db="EMBL/GenBank/DDBJ databases">
        <authorList>
            <consortium name="NIH - Xenopus Gene Collection (XGC) project"/>
        </authorList>
    </citation>
    <scope>NUCLEOTIDE SEQUENCE [LARGE SCALE MRNA]</scope>
    <source>
        <tissue>Egg</tissue>
    </source>
</reference>
<proteinExistence type="evidence at transcript level"/>
<evidence type="ECO:0000250" key="1"/>
<evidence type="ECO:0000305" key="2"/>
<accession>Q5EAV6</accession>
<keyword id="KW-0507">mRNA processing</keyword>
<keyword id="KW-0508">mRNA splicing</keyword>
<keyword id="KW-0539">Nucleus</keyword>
<keyword id="KW-1185">Reference proteome</keyword>
<keyword id="KW-0747">Spliceosome</keyword>
<feature type="chain" id="PRO_0000324102" description="Pre-mRNA-splicing factor 18">
    <location>
        <begin position="1"/>
        <end position="342"/>
    </location>
</feature>
<protein>
    <recommendedName>
        <fullName>Pre-mRNA-splicing factor 18</fullName>
    </recommendedName>
    <alternativeName>
        <fullName>PRP18 homolog</fullName>
    </alternativeName>
</protein>
<name>PRP18_XENLA</name>
<sequence>MDILKAEIARKRKQLEEKALVGGEKKYFKRSELTAKEKEEYFERCGYKMQKEEEEEKPSSSSNPVLELELAEEKLPMTLSRQEVIRRLRERGEPIRLFGETDYETFQRLRKIEILAPEVNKGLRNDLKAALDKIDQQYFNELVAGQETTDEDTQNDLKVHEENTTIEELEVLGECLGQGDDNKDMDTINKVLKFLLGVWAKELNAREDYVKRSVHGKLASATQKQTESYLKPLFRKLRKKNLPADIKESITDIIKFMLQREYVKANDAYLQMAIGNAPWPIGVTMVGIHARTGREKIFSKHVAHVLNDETQRKYIQGLKRLMTICQKYFSTDPSKCVEYNAL</sequence>
<gene>
    <name type="primary">prpf18</name>
</gene>
<dbReference type="EMBL" id="BC090228">
    <property type="protein sequence ID" value="AAH90228.1"/>
    <property type="molecule type" value="mRNA"/>
</dbReference>
<dbReference type="RefSeq" id="NP_001089287.1">
    <property type="nucleotide sequence ID" value="NM_001095818.1"/>
</dbReference>
<dbReference type="SMR" id="Q5EAV6"/>
<dbReference type="BioGRID" id="592116">
    <property type="interactions" value="1"/>
</dbReference>
<dbReference type="IntAct" id="Q5EAV6">
    <property type="interactions" value="1"/>
</dbReference>
<dbReference type="DNASU" id="734335"/>
<dbReference type="GeneID" id="734335"/>
<dbReference type="KEGG" id="xla:734335"/>
<dbReference type="AGR" id="Xenbase:XB-GENE-5838471"/>
<dbReference type="CTD" id="734335"/>
<dbReference type="Xenbase" id="XB-GENE-5838471">
    <property type="gene designation" value="prpf18.L"/>
</dbReference>
<dbReference type="OMA" id="SFAQVRW"/>
<dbReference type="OrthoDB" id="10261918at2759"/>
<dbReference type="Proteomes" id="UP000186698">
    <property type="component" value="Chromosome 9_10L"/>
</dbReference>
<dbReference type="Bgee" id="734335">
    <property type="expression patterns" value="Expressed in muscle tissue and 19 other cell types or tissues"/>
</dbReference>
<dbReference type="GO" id="GO:0016607">
    <property type="term" value="C:nuclear speck"/>
    <property type="evidence" value="ECO:0007669"/>
    <property type="project" value="UniProtKB-SubCell"/>
</dbReference>
<dbReference type="GO" id="GO:0071021">
    <property type="term" value="C:U2-type post-spliceosomal complex"/>
    <property type="evidence" value="ECO:0000318"/>
    <property type="project" value="GO_Central"/>
</dbReference>
<dbReference type="GO" id="GO:0046540">
    <property type="term" value="C:U4/U6 x U5 tri-snRNP complex"/>
    <property type="evidence" value="ECO:0000318"/>
    <property type="project" value="GO_Central"/>
</dbReference>
<dbReference type="GO" id="GO:0005682">
    <property type="term" value="C:U5 snRNP"/>
    <property type="evidence" value="ECO:0000318"/>
    <property type="project" value="GO_Central"/>
</dbReference>
<dbReference type="GO" id="GO:0000350">
    <property type="term" value="P:generation of catalytic spliceosome for second transesterification step"/>
    <property type="evidence" value="ECO:0000318"/>
    <property type="project" value="GO_Central"/>
</dbReference>
<dbReference type="FunFam" id="1.20.940.10:FF:000002">
    <property type="entry name" value="Pre-mRNA processing factor 18"/>
    <property type="match status" value="1"/>
</dbReference>
<dbReference type="FunFam" id="4.10.280.110:FF:000001">
    <property type="entry name" value="pre-mRNA-splicing factor 18 isoform X2"/>
    <property type="match status" value="1"/>
</dbReference>
<dbReference type="Gene3D" id="1.20.940.10">
    <property type="entry name" value="Functional domain of the splicing factor Prp18"/>
    <property type="match status" value="1"/>
</dbReference>
<dbReference type="Gene3D" id="4.10.280.110">
    <property type="entry name" value="Pre-mRNA processing factor 4 domain"/>
    <property type="match status" value="1"/>
</dbReference>
<dbReference type="InterPro" id="IPR004098">
    <property type="entry name" value="Prp18"/>
</dbReference>
<dbReference type="InterPro" id="IPR014906">
    <property type="entry name" value="PRP4-like"/>
</dbReference>
<dbReference type="InterPro" id="IPR036285">
    <property type="entry name" value="PRP4-like_sf"/>
</dbReference>
<dbReference type="InterPro" id="IPR039979">
    <property type="entry name" value="PRPF18"/>
</dbReference>
<dbReference type="PANTHER" id="PTHR13007">
    <property type="entry name" value="PRE-MRNA SPLICING FACTOR-RELATED"/>
    <property type="match status" value="1"/>
</dbReference>
<dbReference type="PANTHER" id="PTHR13007:SF19">
    <property type="entry name" value="PRE-MRNA-SPLICING FACTOR 18"/>
    <property type="match status" value="1"/>
</dbReference>
<dbReference type="Pfam" id="PF02840">
    <property type="entry name" value="Prp18"/>
    <property type="match status" value="1"/>
</dbReference>
<dbReference type="Pfam" id="PF08799">
    <property type="entry name" value="PRP4"/>
    <property type="match status" value="1"/>
</dbReference>
<dbReference type="SMART" id="SM00500">
    <property type="entry name" value="SFM"/>
    <property type="match status" value="1"/>
</dbReference>
<dbReference type="SUPFAM" id="SSF47938">
    <property type="entry name" value="Functional domain of the splicing factor Prp18"/>
    <property type="match status" value="1"/>
</dbReference>
<dbReference type="SUPFAM" id="SSF158230">
    <property type="entry name" value="PRP4-like"/>
    <property type="match status" value="1"/>
</dbReference>
<organism>
    <name type="scientific">Xenopus laevis</name>
    <name type="common">African clawed frog</name>
    <dbReference type="NCBI Taxonomy" id="8355"/>
    <lineage>
        <taxon>Eukaryota</taxon>
        <taxon>Metazoa</taxon>
        <taxon>Chordata</taxon>
        <taxon>Craniata</taxon>
        <taxon>Vertebrata</taxon>
        <taxon>Euteleostomi</taxon>
        <taxon>Amphibia</taxon>
        <taxon>Batrachia</taxon>
        <taxon>Anura</taxon>
        <taxon>Pipoidea</taxon>
        <taxon>Pipidae</taxon>
        <taxon>Xenopodinae</taxon>
        <taxon>Xenopus</taxon>
        <taxon>Xenopus</taxon>
    </lineage>
</organism>
<comment type="function">
    <text evidence="1">Participates in the second step of pre-mRNA splicing.</text>
</comment>
<comment type="subunit">
    <text evidence="1">Interacts with the spliceosome. Part of a complex containing U4/U6 snRNPs (By similarity).</text>
</comment>
<comment type="subcellular location">
    <subcellularLocation>
        <location evidence="1">Nucleus speckle</location>
    </subcellularLocation>
    <text evidence="1">Colocalizes with spliceosomal snRNPs.</text>
</comment>
<comment type="similarity">
    <text evidence="2">Belongs to the PRP18 family.</text>
</comment>